<reference key="1">
    <citation type="journal article" date="2004" name="Science">
        <title>The Ashbya gossypii genome as a tool for mapping the ancient Saccharomyces cerevisiae genome.</title>
        <authorList>
            <person name="Dietrich F.S."/>
            <person name="Voegeli S."/>
            <person name="Brachat S."/>
            <person name="Lerch A."/>
            <person name="Gates K."/>
            <person name="Steiner S."/>
            <person name="Mohr C."/>
            <person name="Poehlmann R."/>
            <person name="Luedi P."/>
            <person name="Choi S."/>
            <person name="Wing R.A."/>
            <person name="Flavier A."/>
            <person name="Gaffney T.D."/>
            <person name="Philippsen P."/>
        </authorList>
    </citation>
    <scope>NUCLEOTIDE SEQUENCE [LARGE SCALE GENOMIC DNA]</scope>
    <source>
        <strain>ATCC 10895 / CBS 109.51 / FGSC 9923 / NRRL Y-1056</strain>
    </source>
</reference>
<reference key="2">
    <citation type="journal article" date="2013" name="G3 (Bethesda)">
        <title>Genomes of Ashbya fungi isolated from insects reveal four mating-type loci, numerous translocations, lack of transposons, and distinct gene duplications.</title>
        <authorList>
            <person name="Dietrich F.S."/>
            <person name="Voegeli S."/>
            <person name="Kuo S."/>
            <person name="Philippsen P."/>
        </authorList>
    </citation>
    <scope>GENOME REANNOTATION</scope>
    <source>
        <strain>ATCC 10895 / CBS 109.51 / FGSC 9923 / NRRL Y-1056</strain>
    </source>
</reference>
<organism>
    <name type="scientific">Eremothecium gossypii (strain ATCC 10895 / CBS 109.51 / FGSC 9923 / NRRL Y-1056)</name>
    <name type="common">Yeast</name>
    <name type="synonym">Ashbya gossypii</name>
    <dbReference type="NCBI Taxonomy" id="284811"/>
    <lineage>
        <taxon>Eukaryota</taxon>
        <taxon>Fungi</taxon>
        <taxon>Dikarya</taxon>
        <taxon>Ascomycota</taxon>
        <taxon>Saccharomycotina</taxon>
        <taxon>Saccharomycetes</taxon>
        <taxon>Saccharomycetales</taxon>
        <taxon>Saccharomycetaceae</taxon>
        <taxon>Eremothecium</taxon>
    </lineage>
</organism>
<keyword id="KW-0963">Cytoplasm</keyword>
<keyword id="KW-0408">Iron</keyword>
<keyword id="KW-0411">Iron-sulfur</keyword>
<keyword id="KW-0479">Metal-binding</keyword>
<keyword id="KW-1185">Reference proteome</keyword>
<accession>Q757B6</accession>
<name>DPH2_EREGS</name>
<sequence>MSEAALVPPALSTNQTEETFNFQQYELLRQDRAAHLGPGITDLASLKERIRSYYAIESLADHLNSHAEYRSITLQFPDDLLFDSALVAEELQALLPDLQCARTDAPAQADTTCSCGTQKTCADSKDSADGRKIWILADTAYSPCCVDEVAAEHVQADVVVHFGDTCLNPVETLPVVYIFGEPYLDRAKVISLFTERYDKDAKVCLMANAPYSRHLESLSGELSQLGYSNLVFTDVALPDTPNAAATILGVSDSHPISHKLYASGDRVYYGAKEQLLCEEQLQSFELFHIGLPPDPRLLFLSTKFQGVTAYDTQKRQIAKGPFPAMMRRYRFMHVARTASTIGILVNTLSLKSTRSLISSLVELIRSCGKKHYMFVVGKPNVAKLANFEPVDVWCVLGCGHGGIVLDHANEFYKPIVTPYELTLALAPELSWTGAWVVDFNTVIDGISADLGLQAGAIPAENVPEFDAVTGKYVGNSRPLRELNHLEIESPQESITTGSTELVKKFSGALTIGSTVSTSAQFLQARQWTGLGSDFNAEDSYEEEGATVEEGLSGVARGYQYDVSNAEHTDADVPKTSGRVMNT</sequence>
<feature type="chain" id="PRO_0000083382" description="2-(3-amino-3-carboxypropyl)histidine synthase subunit 2">
    <location>
        <begin position="1"/>
        <end position="582"/>
    </location>
</feature>
<feature type="binding site" evidence="1">
    <location>
        <position position="145"/>
    </location>
    <ligand>
        <name>[4Fe-4S] cluster</name>
        <dbReference type="ChEBI" id="CHEBI:49883"/>
    </ligand>
</feature>
<feature type="binding site" evidence="1">
    <location>
        <position position="166"/>
    </location>
    <ligand>
        <name>[4Fe-4S] cluster</name>
        <dbReference type="ChEBI" id="CHEBI:49883"/>
    </ligand>
</feature>
<feature type="binding site" evidence="1">
    <location>
        <position position="398"/>
    </location>
    <ligand>
        <name>[4Fe-4S] cluster</name>
        <dbReference type="ChEBI" id="CHEBI:49883"/>
    </ligand>
</feature>
<gene>
    <name type="primary">DPH2</name>
    <name type="ordered locus">AER097C</name>
</gene>
<evidence type="ECO:0000250" key="1">
    <source>
        <dbReference type="UniProtKB" id="P32461"/>
    </source>
</evidence>
<evidence type="ECO:0000305" key="2"/>
<comment type="function">
    <text evidence="1">Required for the first step of diphthamide biosynthesis, a post-translational modification of histidine which occurs in elongation factor 2. DPH1 and DPH2 transfer a 3-amino-3-carboxypropyl (ACP) group from S-adenosyl-L-methionine (SAM) to a histidine residue, the reaction is assisted by a reduction system comprising DPH3 and a NADH-dependent reductase, predominantly CBR1 (By similarity). Facilitates the reduction of the catalytic iron-sulfur cluster found in the DPH1 subunit (By similarity).</text>
</comment>
<comment type="cofactor">
    <cofactor evidence="1">
        <name>[4Fe-4S] cluster</name>
        <dbReference type="ChEBI" id="CHEBI:49883"/>
    </cofactor>
    <text evidence="1">Binds 1 [4Fe-4S] cluster per subunit. The cluster facilitates the reduction of the catalytic iron-sulfur cluster in the DPH1 subunit.</text>
</comment>
<comment type="pathway">
    <text evidence="1">Protein modification; peptidyl-diphthamide biosynthesis.</text>
</comment>
<comment type="subunit">
    <text evidence="1">Component of the 2-(3-amino-3-carboxypropyl)histidine synthase complex composed of DPH1, DPH2, DPH3 and a NADH-dependent reductase, predominantly CBR1.</text>
</comment>
<comment type="subcellular location">
    <subcellularLocation>
        <location evidence="1">Cytoplasm</location>
    </subcellularLocation>
</comment>
<comment type="similarity">
    <text evidence="2">Belongs to the DPH1/DPH2 family. DPH2 subfamily.</text>
</comment>
<protein>
    <recommendedName>
        <fullName evidence="2">2-(3-amino-3-carboxypropyl)histidine synthase subunit 2</fullName>
    </recommendedName>
    <alternativeName>
        <fullName>Diphthamide biosynthesis protein 2</fullName>
    </alternativeName>
    <alternativeName>
        <fullName evidence="2">Diphtheria toxin resistance protein 2</fullName>
    </alternativeName>
    <alternativeName>
        <fullName evidence="2">S-adenosyl-L-methionine:L-histidine 3-amino-3-carboxypropyltransferase 2</fullName>
    </alternativeName>
</protein>
<dbReference type="EMBL" id="AE016818">
    <property type="protein sequence ID" value="AAS52781.1"/>
    <property type="molecule type" value="Genomic_DNA"/>
</dbReference>
<dbReference type="RefSeq" id="NP_984957.1">
    <property type="nucleotide sequence ID" value="NM_210311.1"/>
</dbReference>
<dbReference type="SMR" id="Q757B6"/>
<dbReference type="FunCoup" id="Q757B6">
    <property type="interactions" value="991"/>
</dbReference>
<dbReference type="STRING" id="284811.Q757B6"/>
<dbReference type="EnsemblFungi" id="AAS52781">
    <property type="protein sequence ID" value="AAS52781"/>
    <property type="gene ID" value="AGOS_AER097C"/>
</dbReference>
<dbReference type="GeneID" id="4621162"/>
<dbReference type="KEGG" id="ago:AGOS_AER097C"/>
<dbReference type="eggNOG" id="KOG2648">
    <property type="taxonomic scope" value="Eukaryota"/>
</dbReference>
<dbReference type="HOGENOM" id="CLU_015210_1_1_1"/>
<dbReference type="InParanoid" id="Q757B6"/>
<dbReference type="OMA" id="TSNSRPM"/>
<dbReference type="OrthoDB" id="449241at2759"/>
<dbReference type="UniPathway" id="UPA00559"/>
<dbReference type="Proteomes" id="UP000000591">
    <property type="component" value="Chromosome V"/>
</dbReference>
<dbReference type="GO" id="GO:0120513">
    <property type="term" value="C:2-(3-amino-3-carboxypropyl)histidine synthase complex"/>
    <property type="evidence" value="ECO:0000250"/>
    <property type="project" value="UniProtKB"/>
</dbReference>
<dbReference type="GO" id="GO:0005737">
    <property type="term" value="C:cytoplasm"/>
    <property type="evidence" value="ECO:0007669"/>
    <property type="project" value="UniProtKB-SubCell"/>
</dbReference>
<dbReference type="GO" id="GO:0090560">
    <property type="term" value="F:2-(3-amino-3-carboxypropyl)histidine synthase activity"/>
    <property type="evidence" value="ECO:0007669"/>
    <property type="project" value="UniProtKB-EC"/>
</dbReference>
<dbReference type="GO" id="GO:0051539">
    <property type="term" value="F:4 iron, 4 sulfur cluster binding"/>
    <property type="evidence" value="ECO:0000250"/>
    <property type="project" value="UniProtKB"/>
</dbReference>
<dbReference type="GO" id="GO:0046872">
    <property type="term" value="F:metal ion binding"/>
    <property type="evidence" value="ECO:0007669"/>
    <property type="project" value="UniProtKB-KW"/>
</dbReference>
<dbReference type="GO" id="GO:0017183">
    <property type="term" value="P:protein histidyl modification to diphthamide"/>
    <property type="evidence" value="ECO:0000250"/>
    <property type="project" value="UniProtKB"/>
</dbReference>
<dbReference type="FunFam" id="3.40.50.11860:FF:000001">
    <property type="entry name" value="2-(3-amino-3-carboxypropyl)histidine synthase subunit 2"/>
    <property type="match status" value="1"/>
</dbReference>
<dbReference type="Gene3D" id="3.40.50.11840">
    <property type="entry name" value="Diphthamide synthesis DPH1/DPH2 domain 1"/>
    <property type="match status" value="1"/>
</dbReference>
<dbReference type="Gene3D" id="3.40.50.11860">
    <property type="entry name" value="Diphthamide synthesis DPH1/DPH2 domain 3"/>
    <property type="match status" value="1"/>
</dbReference>
<dbReference type="InterPro" id="IPR010014">
    <property type="entry name" value="DHP2"/>
</dbReference>
<dbReference type="InterPro" id="IPR016435">
    <property type="entry name" value="DPH1/DPH2"/>
</dbReference>
<dbReference type="InterPro" id="IPR042263">
    <property type="entry name" value="DPH1/DPH2_1"/>
</dbReference>
<dbReference type="InterPro" id="IPR042265">
    <property type="entry name" value="DPH1/DPH2_3"/>
</dbReference>
<dbReference type="NCBIfam" id="TIGR00322">
    <property type="entry name" value="diphth2_R"/>
    <property type="match status" value="1"/>
</dbReference>
<dbReference type="NCBIfam" id="TIGR00272">
    <property type="entry name" value="DPH2"/>
    <property type="match status" value="1"/>
</dbReference>
<dbReference type="PANTHER" id="PTHR10762:SF2">
    <property type="entry name" value="2-(3-AMINO-3-CARBOXYPROPYL)HISTIDINE SYNTHASE SUBUNIT 2"/>
    <property type="match status" value="1"/>
</dbReference>
<dbReference type="PANTHER" id="PTHR10762">
    <property type="entry name" value="DIPHTHAMIDE BIOSYNTHESIS PROTEIN"/>
    <property type="match status" value="1"/>
</dbReference>
<dbReference type="Pfam" id="PF01866">
    <property type="entry name" value="Diphthamide_syn"/>
    <property type="match status" value="1"/>
</dbReference>
<dbReference type="SFLD" id="SFLDG01121">
    <property type="entry name" value="Diphthamide_biosynthesis"/>
    <property type="match status" value="1"/>
</dbReference>
<dbReference type="SFLD" id="SFLDF00408">
    <property type="entry name" value="Diphthamide_biosynthesis_famil"/>
    <property type="match status" value="1"/>
</dbReference>
<dbReference type="SFLD" id="SFLDS00032">
    <property type="entry name" value="Radical_SAM_3-amino-3-carboxyp"/>
    <property type="match status" value="1"/>
</dbReference>
<proteinExistence type="inferred from homology"/>